<keyword id="KW-0067">ATP-binding</keyword>
<keyword id="KW-0963">Cytoplasm</keyword>
<keyword id="KW-0418">Kinase</keyword>
<keyword id="KW-0547">Nucleotide-binding</keyword>
<keyword id="KW-0808">Transferase</keyword>
<proteinExistence type="inferred from homology"/>
<gene>
    <name evidence="1" type="primary">udk</name>
    <name type="ordered locus">SCH_2124</name>
</gene>
<sequence>MTDQSHQCVIIGIAGASASGKSLIASTLYRELREQVGDEHIGVIPEDSYYKDQSHLSMEERVKTNYDHPNAMDHSLLFQHLQALKRGSAIELPVYSYVEHTRMQETVRVEPKKVIILEGILLLTDARLREEMNFSIFVDTPLDICLMRRIKRDVNERGRSMDSVMAQYQKTVRPMFLQFIEPSKQYADIIVPRGGKNRIAIDILKAKISQFFE</sequence>
<accession>Q57MN1</accession>
<comment type="catalytic activity">
    <reaction evidence="1">
        <text>uridine + ATP = UMP + ADP + H(+)</text>
        <dbReference type="Rhea" id="RHEA:16825"/>
        <dbReference type="ChEBI" id="CHEBI:15378"/>
        <dbReference type="ChEBI" id="CHEBI:16704"/>
        <dbReference type="ChEBI" id="CHEBI:30616"/>
        <dbReference type="ChEBI" id="CHEBI:57865"/>
        <dbReference type="ChEBI" id="CHEBI:456216"/>
        <dbReference type="EC" id="2.7.1.48"/>
    </reaction>
</comment>
<comment type="catalytic activity">
    <reaction evidence="1">
        <text>cytidine + ATP = CMP + ADP + H(+)</text>
        <dbReference type="Rhea" id="RHEA:24674"/>
        <dbReference type="ChEBI" id="CHEBI:15378"/>
        <dbReference type="ChEBI" id="CHEBI:17562"/>
        <dbReference type="ChEBI" id="CHEBI:30616"/>
        <dbReference type="ChEBI" id="CHEBI:60377"/>
        <dbReference type="ChEBI" id="CHEBI:456216"/>
        <dbReference type="EC" id="2.7.1.48"/>
    </reaction>
</comment>
<comment type="pathway">
    <text evidence="1">Pyrimidine metabolism; CTP biosynthesis via salvage pathway; CTP from cytidine: step 1/3.</text>
</comment>
<comment type="pathway">
    <text evidence="1">Pyrimidine metabolism; UMP biosynthesis via salvage pathway; UMP from uridine: step 1/1.</text>
</comment>
<comment type="subcellular location">
    <subcellularLocation>
        <location evidence="1">Cytoplasm</location>
    </subcellularLocation>
</comment>
<comment type="similarity">
    <text evidence="1">Belongs to the uridine kinase family.</text>
</comment>
<organism>
    <name type="scientific">Salmonella choleraesuis (strain SC-B67)</name>
    <dbReference type="NCBI Taxonomy" id="321314"/>
    <lineage>
        <taxon>Bacteria</taxon>
        <taxon>Pseudomonadati</taxon>
        <taxon>Pseudomonadota</taxon>
        <taxon>Gammaproteobacteria</taxon>
        <taxon>Enterobacterales</taxon>
        <taxon>Enterobacteriaceae</taxon>
        <taxon>Salmonella</taxon>
    </lineage>
</organism>
<feature type="chain" id="PRO_1000017888" description="Uridine kinase">
    <location>
        <begin position="1"/>
        <end position="213"/>
    </location>
</feature>
<feature type="binding site" evidence="1">
    <location>
        <begin position="15"/>
        <end position="22"/>
    </location>
    <ligand>
        <name>ATP</name>
        <dbReference type="ChEBI" id="CHEBI:30616"/>
    </ligand>
</feature>
<protein>
    <recommendedName>
        <fullName evidence="1">Uridine kinase</fullName>
        <ecNumber evidence="1">2.7.1.48</ecNumber>
    </recommendedName>
    <alternativeName>
        <fullName evidence="1">Cytidine monophosphokinase</fullName>
    </alternativeName>
    <alternativeName>
        <fullName evidence="1">Uridine monophosphokinase</fullName>
    </alternativeName>
</protein>
<name>URK_SALCH</name>
<evidence type="ECO:0000255" key="1">
    <source>
        <dbReference type="HAMAP-Rule" id="MF_00551"/>
    </source>
</evidence>
<reference key="1">
    <citation type="journal article" date="2005" name="Nucleic Acids Res.">
        <title>The genome sequence of Salmonella enterica serovar Choleraesuis, a highly invasive and resistant zoonotic pathogen.</title>
        <authorList>
            <person name="Chiu C.-H."/>
            <person name="Tang P."/>
            <person name="Chu C."/>
            <person name="Hu S."/>
            <person name="Bao Q."/>
            <person name="Yu J."/>
            <person name="Chou Y.-Y."/>
            <person name="Wang H.-S."/>
            <person name="Lee Y.-S."/>
        </authorList>
    </citation>
    <scope>NUCLEOTIDE SEQUENCE [LARGE SCALE GENOMIC DNA]</scope>
    <source>
        <strain>SC-B67</strain>
    </source>
</reference>
<dbReference type="EC" id="2.7.1.48" evidence="1"/>
<dbReference type="EMBL" id="AE017220">
    <property type="protein sequence ID" value="AAX66030.1"/>
    <property type="molecule type" value="Genomic_DNA"/>
</dbReference>
<dbReference type="RefSeq" id="WP_000132082.1">
    <property type="nucleotide sequence ID" value="NC_006905.1"/>
</dbReference>
<dbReference type="SMR" id="Q57MN1"/>
<dbReference type="GeneID" id="66756602"/>
<dbReference type="KEGG" id="sec:SCH_2124"/>
<dbReference type="HOGENOM" id="CLU_021278_1_2_6"/>
<dbReference type="UniPathway" id="UPA00574">
    <property type="reaction ID" value="UER00637"/>
</dbReference>
<dbReference type="UniPathway" id="UPA00579">
    <property type="reaction ID" value="UER00640"/>
</dbReference>
<dbReference type="Proteomes" id="UP000000538">
    <property type="component" value="Chromosome"/>
</dbReference>
<dbReference type="GO" id="GO:0005737">
    <property type="term" value="C:cytoplasm"/>
    <property type="evidence" value="ECO:0007669"/>
    <property type="project" value="UniProtKB-SubCell"/>
</dbReference>
<dbReference type="GO" id="GO:0005524">
    <property type="term" value="F:ATP binding"/>
    <property type="evidence" value="ECO:0007669"/>
    <property type="project" value="UniProtKB-UniRule"/>
</dbReference>
<dbReference type="GO" id="GO:0043771">
    <property type="term" value="F:cytidine kinase activity"/>
    <property type="evidence" value="ECO:0007669"/>
    <property type="project" value="RHEA"/>
</dbReference>
<dbReference type="GO" id="GO:0004849">
    <property type="term" value="F:uridine kinase activity"/>
    <property type="evidence" value="ECO:0007669"/>
    <property type="project" value="UniProtKB-UniRule"/>
</dbReference>
<dbReference type="GO" id="GO:0044211">
    <property type="term" value="P:CTP salvage"/>
    <property type="evidence" value="ECO:0007669"/>
    <property type="project" value="UniProtKB-UniRule"/>
</dbReference>
<dbReference type="GO" id="GO:0044206">
    <property type="term" value="P:UMP salvage"/>
    <property type="evidence" value="ECO:0007669"/>
    <property type="project" value="UniProtKB-UniRule"/>
</dbReference>
<dbReference type="CDD" id="cd02023">
    <property type="entry name" value="UMPK"/>
    <property type="match status" value="1"/>
</dbReference>
<dbReference type="FunFam" id="3.40.50.300:FF:000252">
    <property type="entry name" value="Uridine kinase"/>
    <property type="match status" value="1"/>
</dbReference>
<dbReference type="Gene3D" id="3.40.50.300">
    <property type="entry name" value="P-loop containing nucleotide triphosphate hydrolases"/>
    <property type="match status" value="1"/>
</dbReference>
<dbReference type="HAMAP" id="MF_00551">
    <property type="entry name" value="Uridine_kinase"/>
    <property type="match status" value="1"/>
</dbReference>
<dbReference type="InterPro" id="IPR027417">
    <property type="entry name" value="P-loop_NTPase"/>
</dbReference>
<dbReference type="InterPro" id="IPR006083">
    <property type="entry name" value="PRK/URK"/>
</dbReference>
<dbReference type="InterPro" id="IPR026008">
    <property type="entry name" value="Uridine_kinase"/>
</dbReference>
<dbReference type="InterPro" id="IPR000764">
    <property type="entry name" value="Uridine_kinase-like"/>
</dbReference>
<dbReference type="NCBIfam" id="NF004018">
    <property type="entry name" value="PRK05480.1"/>
    <property type="match status" value="1"/>
</dbReference>
<dbReference type="NCBIfam" id="TIGR00235">
    <property type="entry name" value="udk"/>
    <property type="match status" value="1"/>
</dbReference>
<dbReference type="PANTHER" id="PTHR10285">
    <property type="entry name" value="URIDINE KINASE"/>
    <property type="match status" value="1"/>
</dbReference>
<dbReference type="Pfam" id="PF00485">
    <property type="entry name" value="PRK"/>
    <property type="match status" value="1"/>
</dbReference>
<dbReference type="PRINTS" id="PR00988">
    <property type="entry name" value="URIDINKINASE"/>
</dbReference>
<dbReference type="SUPFAM" id="SSF52540">
    <property type="entry name" value="P-loop containing nucleoside triphosphate hydrolases"/>
    <property type="match status" value="1"/>
</dbReference>